<name>RIMP_LISMF</name>
<protein>
    <recommendedName>
        <fullName evidence="1">Ribosome maturation factor RimP</fullName>
    </recommendedName>
</protein>
<feature type="chain" id="PRO_0000181886" description="Ribosome maturation factor RimP">
    <location>
        <begin position="1"/>
        <end position="155"/>
    </location>
</feature>
<sequence length="155" mass="17545">MSKVLEQVEAIVTPITDELQLELVDIAFEKEGPNWFLRIFIDKDGGVDIDECAAVSEKVSEKMDENDPITQNYFLEVSSPGAERPLKKEQDFENAVSKYVHVTSYEPIDGRKMWEGTLVSYDGTTLVITITDKTRKITCEIPKDKVAKARLAIQF</sequence>
<keyword id="KW-0963">Cytoplasm</keyword>
<keyword id="KW-0690">Ribosome biogenesis</keyword>
<comment type="function">
    <text evidence="1">Required for maturation of 30S ribosomal subunits.</text>
</comment>
<comment type="subcellular location">
    <subcellularLocation>
        <location evidence="1">Cytoplasm</location>
    </subcellularLocation>
</comment>
<comment type="similarity">
    <text evidence="1">Belongs to the RimP family.</text>
</comment>
<reference key="1">
    <citation type="journal article" date="2004" name="Nucleic Acids Res.">
        <title>Whole genome comparisons of serotype 4b and 1/2a strains of the food-borne pathogen Listeria monocytogenes reveal new insights into the core genome components of this species.</title>
        <authorList>
            <person name="Nelson K.E."/>
            <person name="Fouts D.E."/>
            <person name="Mongodin E.F."/>
            <person name="Ravel J."/>
            <person name="DeBoy R.T."/>
            <person name="Kolonay J.F."/>
            <person name="Rasko D.A."/>
            <person name="Angiuoli S.V."/>
            <person name="Gill S.R."/>
            <person name="Paulsen I.T."/>
            <person name="Peterson J.D."/>
            <person name="White O."/>
            <person name="Nelson W.C."/>
            <person name="Nierman W.C."/>
            <person name="Beanan M.J."/>
            <person name="Brinkac L.M."/>
            <person name="Daugherty S.C."/>
            <person name="Dodson R.J."/>
            <person name="Durkin A.S."/>
            <person name="Madupu R."/>
            <person name="Haft D.H."/>
            <person name="Selengut J."/>
            <person name="Van Aken S.E."/>
            <person name="Khouri H.M."/>
            <person name="Fedorova N."/>
            <person name="Forberger H.A."/>
            <person name="Tran B."/>
            <person name="Kathariou S."/>
            <person name="Wonderling L.D."/>
            <person name="Uhlich G.A."/>
            <person name="Bayles D.O."/>
            <person name="Luchansky J.B."/>
            <person name="Fraser C.M."/>
        </authorList>
    </citation>
    <scope>NUCLEOTIDE SEQUENCE [LARGE SCALE GENOMIC DNA]</scope>
    <source>
        <strain>F2365</strain>
    </source>
</reference>
<accession>Q720A1</accession>
<proteinExistence type="inferred from homology"/>
<evidence type="ECO:0000255" key="1">
    <source>
        <dbReference type="HAMAP-Rule" id="MF_01077"/>
    </source>
</evidence>
<organism>
    <name type="scientific">Listeria monocytogenes serotype 4b (strain F2365)</name>
    <dbReference type="NCBI Taxonomy" id="265669"/>
    <lineage>
        <taxon>Bacteria</taxon>
        <taxon>Bacillati</taxon>
        <taxon>Bacillota</taxon>
        <taxon>Bacilli</taxon>
        <taxon>Bacillales</taxon>
        <taxon>Listeriaceae</taxon>
        <taxon>Listeria</taxon>
    </lineage>
</organism>
<gene>
    <name evidence="1" type="primary">rimP</name>
    <name type="ordered locus">LMOf2365_1338</name>
</gene>
<dbReference type="EMBL" id="AE017262">
    <property type="protein sequence ID" value="AAT04113.1"/>
    <property type="molecule type" value="Genomic_DNA"/>
</dbReference>
<dbReference type="RefSeq" id="WP_003726418.1">
    <property type="nucleotide sequence ID" value="NC_002973.6"/>
</dbReference>
<dbReference type="SMR" id="Q720A1"/>
<dbReference type="KEGG" id="lmf:LMOf2365_1338"/>
<dbReference type="HOGENOM" id="CLU_070525_2_0_9"/>
<dbReference type="GO" id="GO:0005829">
    <property type="term" value="C:cytosol"/>
    <property type="evidence" value="ECO:0007669"/>
    <property type="project" value="TreeGrafter"/>
</dbReference>
<dbReference type="GO" id="GO:0000028">
    <property type="term" value="P:ribosomal small subunit assembly"/>
    <property type="evidence" value="ECO:0007669"/>
    <property type="project" value="TreeGrafter"/>
</dbReference>
<dbReference type="GO" id="GO:0006412">
    <property type="term" value="P:translation"/>
    <property type="evidence" value="ECO:0007669"/>
    <property type="project" value="TreeGrafter"/>
</dbReference>
<dbReference type="CDD" id="cd01734">
    <property type="entry name" value="YlxS_C"/>
    <property type="match status" value="1"/>
</dbReference>
<dbReference type="FunFam" id="2.30.30.180:FF:000002">
    <property type="entry name" value="Ribosome maturation factor RimP"/>
    <property type="match status" value="1"/>
</dbReference>
<dbReference type="FunFam" id="3.30.300.70:FF:000001">
    <property type="entry name" value="Ribosome maturation factor RimP"/>
    <property type="match status" value="1"/>
</dbReference>
<dbReference type="Gene3D" id="2.30.30.180">
    <property type="entry name" value="Ribosome maturation factor RimP, C-terminal domain"/>
    <property type="match status" value="1"/>
</dbReference>
<dbReference type="Gene3D" id="3.30.300.70">
    <property type="entry name" value="RimP-like superfamily, N-terminal"/>
    <property type="match status" value="1"/>
</dbReference>
<dbReference type="HAMAP" id="MF_01077">
    <property type="entry name" value="RimP"/>
    <property type="match status" value="1"/>
</dbReference>
<dbReference type="InterPro" id="IPR003728">
    <property type="entry name" value="Ribosome_maturation_RimP"/>
</dbReference>
<dbReference type="InterPro" id="IPR028998">
    <property type="entry name" value="RimP_C"/>
</dbReference>
<dbReference type="InterPro" id="IPR036847">
    <property type="entry name" value="RimP_C_sf"/>
</dbReference>
<dbReference type="InterPro" id="IPR028989">
    <property type="entry name" value="RimP_N"/>
</dbReference>
<dbReference type="InterPro" id="IPR035956">
    <property type="entry name" value="RimP_N_sf"/>
</dbReference>
<dbReference type="NCBIfam" id="NF000928">
    <property type="entry name" value="PRK00092.1-2"/>
    <property type="match status" value="1"/>
</dbReference>
<dbReference type="PANTHER" id="PTHR33867">
    <property type="entry name" value="RIBOSOME MATURATION FACTOR RIMP"/>
    <property type="match status" value="1"/>
</dbReference>
<dbReference type="PANTHER" id="PTHR33867:SF1">
    <property type="entry name" value="RIBOSOME MATURATION FACTOR RIMP"/>
    <property type="match status" value="1"/>
</dbReference>
<dbReference type="Pfam" id="PF17384">
    <property type="entry name" value="DUF150_C"/>
    <property type="match status" value="1"/>
</dbReference>
<dbReference type="Pfam" id="PF02576">
    <property type="entry name" value="RimP_N"/>
    <property type="match status" value="1"/>
</dbReference>
<dbReference type="SUPFAM" id="SSF74942">
    <property type="entry name" value="YhbC-like, C-terminal domain"/>
    <property type="match status" value="1"/>
</dbReference>
<dbReference type="SUPFAM" id="SSF75420">
    <property type="entry name" value="YhbC-like, N-terminal domain"/>
    <property type="match status" value="1"/>
</dbReference>